<evidence type="ECO:0000250" key="1"/>
<evidence type="ECO:0000305" key="2"/>
<protein>
    <recommendedName>
        <fullName>Aminoacyltransferase FemA</fullName>
        <ecNumber>2.3.2.17</ecNumber>
    </recommendedName>
    <alternativeName>
        <fullName>Factor essential for expression of methicillin resistance A</fullName>
    </alternativeName>
    <alternativeName>
        <fullName>N-acetylmuramoyl-L-alanyl-D-glutamyl-L-lysyl-(N6-glycyl)-D-alanyl-D-alanine-diphosphoundecaprenyl-N-acetylglucosamine:glycine glycyltransferase</fullName>
    </alternativeName>
</protein>
<feature type="chain" id="PRO_0000232599" description="Aminoacyltransferase FemA">
    <location>
        <begin position="1"/>
        <end position="420"/>
    </location>
</feature>
<name>FEMA_STAAS</name>
<dbReference type="EC" id="2.3.2.17"/>
<dbReference type="EMBL" id="BX571857">
    <property type="protein sequence ID" value="CAG43091.1"/>
    <property type="molecule type" value="Genomic_DNA"/>
</dbReference>
<dbReference type="RefSeq" id="WP_000673309.1">
    <property type="nucleotide sequence ID" value="NC_002953.3"/>
</dbReference>
<dbReference type="SMR" id="Q6G9I5"/>
<dbReference type="KEGG" id="sas:SAS1314"/>
<dbReference type="HOGENOM" id="CLU_048411_1_0_9"/>
<dbReference type="GO" id="GO:0005737">
    <property type="term" value="C:cytoplasm"/>
    <property type="evidence" value="ECO:0007669"/>
    <property type="project" value="UniProtKB-SubCell"/>
</dbReference>
<dbReference type="GO" id="GO:0016755">
    <property type="term" value="F:aminoacyltransferase activity"/>
    <property type="evidence" value="ECO:0007669"/>
    <property type="project" value="InterPro"/>
</dbReference>
<dbReference type="GO" id="GO:0000166">
    <property type="term" value="F:nucleotide binding"/>
    <property type="evidence" value="ECO:0007669"/>
    <property type="project" value="InterPro"/>
</dbReference>
<dbReference type="GO" id="GO:0071555">
    <property type="term" value="P:cell wall organization"/>
    <property type="evidence" value="ECO:0007669"/>
    <property type="project" value="UniProtKB-KW"/>
</dbReference>
<dbReference type="GO" id="GO:0009252">
    <property type="term" value="P:peptidoglycan biosynthetic process"/>
    <property type="evidence" value="ECO:0007669"/>
    <property type="project" value="UniProtKB-KW"/>
</dbReference>
<dbReference type="GO" id="GO:0008360">
    <property type="term" value="P:regulation of cell shape"/>
    <property type="evidence" value="ECO:0007669"/>
    <property type="project" value="UniProtKB-KW"/>
</dbReference>
<dbReference type="Gene3D" id="1.20.58.90">
    <property type="match status" value="1"/>
</dbReference>
<dbReference type="Gene3D" id="3.40.630.30">
    <property type="match status" value="2"/>
</dbReference>
<dbReference type="InterPro" id="IPR016181">
    <property type="entry name" value="Acyl_CoA_acyltransferase"/>
</dbReference>
<dbReference type="InterPro" id="IPR003447">
    <property type="entry name" value="FEMABX"/>
</dbReference>
<dbReference type="InterPro" id="IPR050644">
    <property type="entry name" value="PG_Glycine_Bridge_Synth"/>
</dbReference>
<dbReference type="InterPro" id="IPR010978">
    <property type="entry name" value="tRNA-bd_arm"/>
</dbReference>
<dbReference type="PANTHER" id="PTHR36174:SF2">
    <property type="entry name" value="AMINOACYLTRANSFERASE FEMA"/>
    <property type="match status" value="1"/>
</dbReference>
<dbReference type="PANTHER" id="PTHR36174">
    <property type="entry name" value="LIPID II:GLYCINE GLYCYLTRANSFERASE"/>
    <property type="match status" value="1"/>
</dbReference>
<dbReference type="Pfam" id="PF02388">
    <property type="entry name" value="FemAB"/>
    <property type="match status" value="1"/>
</dbReference>
<dbReference type="SUPFAM" id="SSF55729">
    <property type="entry name" value="Acyl-CoA N-acyltransferases (Nat)"/>
    <property type="match status" value="2"/>
</dbReference>
<dbReference type="SUPFAM" id="SSF46589">
    <property type="entry name" value="tRNA-binding arm"/>
    <property type="match status" value="1"/>
</dbReference>
<dbReference type="PROSITE" id="PS51191">
    <property type="entry name" value="FEMABX"/>
    <property type="match status" value="1"/>
</dbReference>
<gene>
    <name type="primary">femA</name>
    <name type="ordered locus">SAS1314</name>
</gene>
<organism>
    <name type="scientific">Staphylococcus aureus (strain MSSA476)</name>
    <dbReference type="NCBI Taxonomy" id="282459"/>
    <lineage>
        <taxon>Bacteria</taxon>
        <taxon>Bacillati</taxon>
        <taxon>Bacillota</taxon>
        <taxon>Bacilli</taxon>
        <taxon>Bacillales</taxon>
        <taxon>Staphylococcaceae</taxon>
        <taxon>Staphylococcus</taxon>
    </lineage>
</organism>
<keyword id="KW-0012">Acyltransferase</keyword>
<keyword id="KW-0133">Cell shape</keyword>
<keyword id="KW-0961">Cell wall biogenesis/degradation</keyword>
<keyword id="KW-0963">Cytoplasm</keyword>
<keyword id="KW-0573">Peptidoglycan synthesis</keyword>
<keyword id="KW-0808">Transferase</keyword>
<sequence length="420" mass="49124">MKFTNLTAKEFGAFTDSMPYSHFTQTVGHYELKLAEGYETHLVGIKNNNNEVIAACLLTAVPVMKVFKYFYSNRGPVIDYENQELVHFFFNELSKYVKKHRCLYLHIDPYLPYQYLNHDGEITGNAGNDWFFDKMSNLGFEHTGFHKGFDPVLQIRYHSVLDLKDKTADDIIKNMDGLRKRNTKKVKKNGVKVRFLSEEELPIFRSFMEDTSESKAFADRDDKFYYNRLKYYKDRVLVPLAYINFDEYIKELNEERDILNKDLNKALKDIEKRPENKKAHNKRDNLQQQLDANEQKIEEGKRLQEEHGNELPISAGFFFINPFEVVYYAGGTSNAFRHFAGSYAVQWEMINYALNHGIDRYNFYGVSGKFTEDAEDAGVVKFKKGYNAEIIEYVGDFIKPINKPVYAAYTALKKVKDRIF</sequence>
<proteinExistence type="inferred from homology"/>
<reference key="1">
    <citation type="journal article" date="2004" name="Proc. Natl. Acad. Sci. U.S.A.">
        <title>Complete genomes of two clinical Staphylococcus aureus strains: evidence for the rapid evolution of virulence and drug resistance.</title>
        <authorList>
            <person name="Holden M.T.G."/>
            <person name="Feil E.J."/>
            <person name="Lindsay J.A."/>
            <person name="Peacock S.J."/>
            <person name="Day N.P.J."/>
            <person name="Enright M.C."/>
            <person name="Foster T.J."/>
            <person name="Moore C.E."/>
            <person name="Hurst L."/>
            <person name="Atkin R."/>
            <person name="Barron A."/>
            <person name="Bason N."/>
            <person name="Bentley S.D."/>
            <person name="Chillingworth C."/>
            <person name="Chillingworth T."/>
            <person name="Churcher C."/>
            <person name="Clark L."/>
            <person name="Corton C."/>
            <person name="Cronin A."/>
            <person name="Doggett J."/>
            <person name="Dowd L."/>
            <person name="Feltwell T."/>
            <person name="Hance Z."/>
            <person name="Harris B."/>
            <person name="Hauser H."/>
            <person name="Holroyd S."/>
            <person name="Jagels K."/>
            <person name="James K.D."/>
            <person name="Lennard N."/>
            <person name="Line A."/>
            <person name="Mayes R."/>
            <person name="Moule S."/>
            <person name="Mungall K."/>
            <person name="Ormond D."/>
            <person name="Quail M.A."/>
            <person name="Rabbinowitsch E."/>
            <person name="Rutherford K.M."/>
            <person name="Sanders M."/>
            <person name="Sharp S."/>
            <person name="Simmonds M."/>
            <person name="Stevens K."/>
            <person name="Whitehead S."/>
            <person name="Barrell B.G."/>
            <person name="Spratt B.G."/>
            <person name="Parkhill J."/>
        </authorList>
    </citation>
    <scope>NUCLEOTIDE SEQUENCE [LARGE SCALE GENOMIC DNA]</scope>
    <source>
        <strain>MSSA476</strain>
    </source>
</reference>
<comment type="function">
    <text evidence="1">Catalyzes the formation of the pentaglycine interpeptide bridge, which is characteristic of the S.aureus peptidoglycan. Adds glycines 2 and 3 of the pentaglycine bridge, using glycyl-tRNA(Gly) as donor (By similarity).</text>
</comment>
<comment type="catalytic activity">
    <reaction>
        <text>beta-D-GlcNAc-(1-&gt;4)-Mur2Ac(oyl-L-Ala-D-isoglutaminyl-L-Lys-(N(6)-Gly)-D-Ala-D-Ala)-di-trans,octa-cis-undecaprenyl diphosphate + 2 glycyl-tRNA(Gly) = MurNAc-L-Ala-D-isoglutaminyl-L-Lys-(N(6)-tri-Gly)-D-Ala-D-Ala-diphospho-di-trans,octa-cis-undecaprenyl-GlcNAc + 2 tRNA(Gly) + 2 H(+)</text>
        <dbReference type="Rhea" id="RHEA:30439"/>
        <dbReference type="Rhea" id="RHEA-COMP:9664"/>
        <dbReference type="Rhea" id="RHEA-COMP:9683"/>
        <dbReference type="ChEBI" id="CHEBI:15378"/>
        <dbReference type="ChEBI" id="CHEBI:62234"/>
        <dbReference type="ChEBI" id="CHEBI:62235"/>
        <dbReference type="ChEBI" id="CHEBI:78442"/>
        <dbReference type="ChEBI" id="CHEBI:78522"/>
        <dbReference type="EC" id="2.3.2.17"/>
    </reaction>
</comment>
<comment type="subunit">
    <text evidence="1">Homodimer. Interacts with FemB (By similarity).</text>
</comment>
<comment type="subcellular location">
    <subcellularLocation>
        <location evidence="1">Cytoplasm</location>
    </subcellularLocation>
</comment>
<comment type="similarity">
    <text evidence="2">Belongs to the FemABX family.</text>
</comment>
<accession>Q6G9I5</accession>